<protein>
    <recommendedName>
        <fullName evidence="1">23S rRNA (guanosine-2'-O-)-methyltransferase RlmB</fullName>
        <ecNumber evidence="1">2.1.1.185</ecNumber>
    </recommendedName>
    <alternativeName>
        <fullName evidence="1">23S rRNA (guanosine2251 2'-O)-methyltransferase</fullName>
    </alternativeName>
    <alternativeName>
        <fullName evidence="1">23S rRNA Gm2251 2'-O-methyltransferase</fullName>
    </alternativeName>
</protein>
<name>RLMB_NEIMB</name>
<comment type="function">
    <text evidence="1">Specifically methylates the ribose of guanosine 2251 in 23S rRNA.</text>
</comment>
<comment type="catalytic activity">
    <reaction evidence="1">
        <text>guanosine(2251) in 23S rRNA + S-adenosyl-L-methionine = 2'-O-methylguanosine(2251) in 23S rRNA + S-adenosyl-L-homocysteine + H(+)</text>
        <dbReference type="Rhea" id="RHEA:24140"/>
        <dbReference type="Rhea" id="RHEA-COMP:10239"/>
        <dbReference type="Rhea" id="RHEA-COMP:10241"/>
        <dbReference type="ChEBI" id="CHEBI:15378"/>
        <dbReference type="ChEBI" id="CHEBI:57856"/>
        <dbReference type="ChEBI" id="CHEBI:59789"/>
        <dbReference type="ChEBI" id="CHEBI:74269"/>
        <dbReference type="ChEBI" id="CHEBI:74445"/>
        <dbReference type="EC" id="2.1.1.185"/>
    </reaction>
</comment>
<comment type="subcellular location">
    <subcellularLocation>
        <location evidence="1">Cytoplasm</location>
    </subcellularLocation>
</comment>
<comment type="similarity">
    <text evidence="1">Belongs to the class IV-like SAM-binding methyltransferase superfamily. RNA methyltransferase TrmH family. RlmB subfamily.</text>
</comment>
<feature type="chain" id="PRO_0000159792" description="23S rRNA (guanosine-2'-O-)-methyltransferase RlmB">
    <location>
        <begin position="1"/>
        <end position="250"/>
    </location>
</feature>
<feature type="binding site" evidence="1">
    <location>
        <position position="197"/>
    </location>
    <ligand>
        <name>S-adenosyl-L-methionine</name>
        <dbReference type="ChEBI" id="CHEBI:59789"/>
    </ligand>
</feature>
<feature type="binding site" evidence="1">
    <location>
        <position position="217"/>
    </location>
    <ligand>
        <name>S-adenosyl-L-methionine</name>
        <dbReference type="ChEBI" id="CHEBI:59789"/>
    </ligand>
</feature>
<feature type="binding site" evidence="1">
    <location>
        <position position="226"/>
    </location>
    <ligand>
        <name>S-adenosyl-L-methionine</name>
        <dbReference type="ChEBI" id="CHEBI:59789"/>
    </ligand>
</feature>
<gene>
    <name evidence="1" type="primary">rlmB</name>
    <name type="ordered locus">NMB0931</name>
</gene>
<keyword id="KW-0963">Cytoplasm</keyword>
<keyword id="KW-0489">Methyltransferase</keyword>
<keyword id="KW-1185">Reference proteome</keyword>
<keyword id="KW-0698">rRNA processing</keyword>
<keyword id="KW-0949">S-adenosyl-L-methionine</keyword>
<keyword id="KW-0808">Transferase</keyword>
<accession>Q9JZR3</accession>
<dbReference type="EC" id="2.1.1.185" evidence="1"/>
<dbReference type="EMBL" id="AE002098">
    <property type="protein sequence ID" value="AAF41338.1"/>
    <property type="molecule type" value="Genomic_DNA"/>
</dbReference>
<dbReference type="PIR" id="F81141">
    <property type="entry name" value="F81141"/>
</dbReference>
<dbReference type="RefSeq" id="NP_273970.1">
    <property type="nucleotide sequence ID" value="NC_003112.2"/>
</dbReference>
<dbReference type="RefSeq" id="WP_002231513.1">
    <property type="nucleotide sequence ID" value="NC_003112.2"/>
</dbReference>
<dbReference type="SMR" id="Q9JZR3"/>
<dbReference type="FunCoup" id="Q9JZR3">
    <property type="interactions" value="448"/>
</dbReference>
<dbReference type="STRING" id="122586.NMB0931"/>
<dbReference type="PaxDb" id="122586-NMB0931"/>
<dbReference type="KEGG" id="nme:NMB0931"/>
<dbReference type="PATRIC" id="fig|122586.8.peg.1180"/>
<dbReference type="HOGENOM" id="CLU_021322_0_1_4"/>
<dbReference type="InParanoid" id="Q9JZR3"/>
<dbReference type="OrthoDB" id="9785673at2"/>
<dbReference type="Proteomes" id="UP000000425">
    <property type="component" value="Chromosome"/>
</dbReference>
<dbReference type="GO" id="GO:0005829">
    <property type="term" value="C:cytosol"/>
    <property type="evidence" value="ECO:0000318"/>
    <property type="project" value="GO_Central"/>
</dbReference>
<dbReference type="GO" id="GO:0003723">
    <property type="term" value="F:RNA binding"/>
    <property type="evidence" value="ECO:0007669"/>
    <property type="project" value="InterPro"/>
</dbReference>
<dbReference type="GO" id="GO:0008173">
    <property type="term" value="F:RNA methyltransferase activity"/>
    <property type="evidence" value="ECO:0000318"/>
    <property type="project" value="GO_Central"/>
</dbReference>
<dbReference type="GO" id="GO:0070039">
    <property type="term" value="F:rRNA (guanosine-2'-O-)-methyltransferase activity"/>
    <property type="evidence" value="ECO:0007669"/>
    <property type="project" value="UniProtKB-UniRule"/>
</dbReference>
<dbReference type="CDD" id="cd18103">
    <property type="entry name" value="SpoU-like_RlmB"/>
    <property type="match status" value="1"/>
</dbReference>
<dbReference type="FunFam" id="3.40.1280.10:FF:000005">
    <property type="entry name" value="23S rRNA (guanosine-2'-O-)-methyltransferase RlmB"/>
    <property type="match status" value="1"/>
</dbReference>
<dbReference type="Gene3D" id="3.30.1330.30">
    <property type="match status" value="1"/>
</dbReference>
<dbReference type="Gene3D" id="3.40.1280.10">
    <property type="match status" value="1"/>
</dbReference>
<dbReference type="HAMAP" id="MF_01887">
    <property type="entry name" value="23SrRNA_methyltr_B"/>
    <property type="match status" value="1"/>
</dbReference>
<dbReference type="InterPro" id="IPR024915">
    <property type="entry name" value="23S_rRNA_MeTrfase_RlmB"/>
</dbReference>
<dbReference type="InterPro" id="IPR029028">
    <property type="entry name" value="Alpha/beta_knot_MTases"/>
</dbReference>
<dbReference type="InterPro" id="IPR029064">
    <property type="entry name" value="Ribosomal_eL30-like_sf"/>
</dbReference>
<dbReference type="InterPro" id="IPR004441">
    <property type="entry name" value="rRNA_MeTrfase_TrmH"/>
</dbReference>
<dbReference type="InterPro" id="IPR001537">
    <property type="entry name" value="SpoU_MeTrfase"/>
</dbReference>
<dbReference type="InterPro" id="IPR013123">
    <property type="entry name" value="SpoU_subst-bd"/>
</dbReference>
<dbReference type="InterPro" id="IPR029026">
    <property type="entry name" value="tRNA_m1G_MTases_N"/>
</dbReference>
<dbReference type="NCBIfam" id="TIGR00186">
    <property type="entry name" value="rRNA_methyl_3"/>
    <property type="match status" value="1"/>
</dbReference>
<dbReference type="PANTHER" id="PTHR46429">
    <property type="entry name" value="23S RRNA (GUANOSINE-2'-O-)-METHYLTRANSFERASE RLMB"/>
    <property type="match status" value="1"/>
</dbReference>
<dbReference type="PANTHER" id="PTHR46429:SF1">
    <property type="entry name" value="23S RRNA (GUANOSINE-2'-O-)-METHYLTRANSFERASE RLMB"/>
    <property type="match status" value="1"/>
</dbReference>
<dbReference type="Pfam" id="PF00588">
    <property type="entry name" value="SpoU_methylase"/>
    <property type="match status" value="1"/>
</dbReference>
<dbReference type="Pfam" id="PF08032">
    <property type="entry name" value="SpoU_sub_bind"/>
    <property type="match status" value="1"/>
</dbReference>
<dbReference type="SMART" id="SM00967">
    <property type="entry name" value="SpoU_sub_bind"/>
    <property type="match status" value="1"/>
</dbReference>
<dbReference type="SUPFAM" id="SSF75217">
    <property type="entry name" value="alpha/beta knot"/>
    <property type="match status" value="1"/>
</dbReference>
<dbReference type="SUPFAM" id="SSF55315">
    <property type="entry name" value="L30e-like"/>
    <property type="match status" value="1"/>
</dbReference>
<proteinExistence type="inferred from homology"/>
<evidence type="ECO:0000255" key="1">
    <source>
        <dbReference type="HAMAP-Rule" id="MF_01887"/>
    </source>
</evidence>
<reference key="1">
    <citation type="journal article" date="2000" name="Science">
        <title>Complete genome sequence of Neisseria meningitidis serogroup B strain MC58.</title>
        <authorList>
            <person name="Tettelin H."/>
            <person name="Saunders N.J."/>
            <person name="Heidelberg J.F."/>
            <person name="Jeffries A.C."/>
            <person name="Nelson K.E."/>
            <person name="Eisen J.A."/>
            <person name="Ketchum K.A."/>
            <person name="Hood D.W."/>
            <person name="Peden J.F."/>
            <person name="Dodson R.J."/>
            <person name="Nelson W.C."/>
            <person name="Gwinn M.L."/>
            <person name="DeBoy R.T."/>
            <person name="Peterson J.D."/>
            <person name="Hickey E.K."/>
            <person name="Haft D.H."/>
            <person name="Salzberg S.L."/>
            <person name="White O."/>
            <person name="Fleischmann R.D."/>
            <person name="Dougherty B.A."/>
            <person name="Mason T.M."/>
            <person name="Ciecko A."/>
            <person name="Parksey D.S."/>
            <person name="Blair E."/>
            <person name="Cittone H."/>
            <person name="Clark E.B."/>
            <person name="Cotton M.D."/>
            <person name="Utterback T.R."/>
            <person name="Khouri H.M."/>
            <person name="Qin H."/>
            <person name="Vamathevan J.J."/>
            <person name="Gill J."/>
            <person name="Scarlato V."/>
            <person name="Masignani V."/>
            <person name="Pizza M."/>
            <person name="Grandi G."/>
            <person name="Sun L."/>
            <person name="Smith H.O."/>
            <person name="Fraser C.M."/>
            <person name="Moxon E.R."/>
            <person name="Rappuoli R."/>
            <person name="Venter J.C."/>
        </authorList>
    </citation>
    <scope>NUCLEOTIDE SEQUENCE [LARGE SCALE GENOMIC DNA]</scope>
    <source>
        <strain>ATCC BAA-335 / MC58</strain>
    </source>
</reference>
<sequence length="250" mass="27467">MANQRPIYGFHAVNARLWQNPKSIVELYIQEGKSDARTREVLEKAANENIRVYFADADRLNAISKGARHQGVVGFIDASKNHVHLEDVLENLSEPPLLLILDGITDPHNLGACLRTADAMGVHAVIAPKDKSAGLNATVSKVACGAAETVPYITVTNLARTLRELKEYGIWIIGTDMSGESDLYHCNLPDSAAWVMGNEGDGMRRLTREHCDMLVSIPMFGTVESMNVSVSAGMVLSETRRQRVLKNEKV</sequence>
<organism>
    <name type="scientific">Neisseria meningitidis serogroup B (strain ATCC BAA-335 / MC58)</name>
    <dbReference type="NCBI Taxonomy" id="122586"/>
    <lineage>
        <taxon>Bacteria</taxon>
        <taxon>Pseudomonadati</taxon>
        <taxon>Pseudomonadota</taxon>
        <taxon>Betaproteobacteria</taxon>
        <taxon>Neisseriales</taxon>
        <taxon>Neisseriaceae</taxon>
        <taxon>Neisseria</taxon>
    </lineage>
</organism>